<name>Y095_AGRFC</name>
<dbReference type="EMBL" id="AE007869">
    <property type="protein sequence ID" value="AAK85915.1"/>
    <property type="molecule type" value="Genomic_DNA"/>
</dbReference>
<dbReference type="PIR" id="AB2588">
    <property type="entry name" value="AB2588"/>
</dbReference>
<dbReference type="PIR" id="B97370">
    <property type="entry name" value="B97370"/>
</dbReference>
<dbReference type="RefSeq" id="NP_353130.1">
    <property type="nucleotide sequence ID" value="NC_003062.2"/>
</dbReference>
<dbReference type="RefSeq" id="WP_006309920.1">
    <property type="nucleotide sequence ID" value="NC_003062.2"/>
</dbReference>
<dbReference type="SMR" id="Q8UJ43"/>
<dbReference type="STRING" id="176299.Atu0095"/>
<dbReference type="EnsemblBacteria" id="AAK85915">
    <property type="protein sequence ID" value="AAK85915"/>
    <property type="gene ID" value="Atu0095"/>
</dbReference>
<dbReference type="GeneID" id="79862731"/>
<dbReference type="KEGG" id="atu:Atu0095"/>
<dbReference type="PATRIC" id="fig|176299.10.peg.89"/>
<dbReference type="eggNOG" id="COG0718">
    <property type="taxonomic scope" value="Bacteria"/>
</dbReference>
<dbReference type="HOGENOM" id="CLU_140930_0_1_5"/>
<dbReference type="OrthoDB" id="9803080at2"/>
<dbReference type="PhylomeDB" id="Q8UJ43"/>
<dbReference type="BioCyc" id="AGRO:ATU0095-MONOMER"/>
<dbReference type="Proteomes" id="UP000000813">
    <property type="component" value="Chromosome circular"/>
</dbReference>
<dbReference type="GO" id="GO:0043590">
    <property type="term" value="C:bacterial nucleoid"/>
    <property type="evidence" value="ECO:0007669"/>
    <property type="project" value="UniProtKB-UniRule"/>
</dbReference>
<dbReference type="GO" id="GO:0005829">
    <property type="term" value="C:cytosol"/>
    <property type="evidence" value="ECO:0007669"/>
    <property type="project" value="TreeGrafter"/>
</dbReference>
<dbReference type="GO" id="GO:0003677">
    <property type="term" value="F:DNA binding"/>
    <property type="evidence" value="ECO:0007669"/>
    <property type="project" value="UniProtKB-UniRule"/>
</dbReference>
<dbReference type="Gene3D" id="3.30.1310.10">
    <property type="entry name" value="Nucleoid-associated protein YbaB-like domain"/>
    <property type="match status" value="1"/>
</dbReference>
<dbReference type="HAMAP" id="MF_00274">
    <property type="entry name" value="DNA_YbaB_EbfC"/>
    <property type="match status" value="1"/>
</dbReference>
<dbReference type="InterPro" id="IPR036894">
    <property type="entry name" value="YbaB-like_sf"/>
</dbReference>
<dbReference type="InterPro" id="IPR004401">
    <property type="entry name" value="YbaB/EbfC"/>
</dbReference>
<dbReference type="NCBIfam" id="TIGR00103">
    <property type="entry name" value="DNA_YbaB_EbfC"/>
    <property type="match status" value="1"/>
</dbReference>
<dbReference type="PANTHER" id="PTHR33449">
    <property type="entry name" value="NUCLEOID-ASSOCIATED PROTEIN YBAB"/>
    <property type="match status" value="1"/>
</dbReference>
<dbReference type="PANTHER" id="PTHR33449:SF1">
    <property type="entry name" value="NUCLEOID-ASSOCIATED PROTEIN YBAB"/>
    <property type="match status" value="1"/>
</dbReference>
<dbReference type="Pfam" id="PF02575">
    <property type="entry name" value="YbaB_DNA_bd"/>
    <property type="match status" value="1"/>
</dbReference>
<dbReference type="PIRSF" id="PIRSF004555">
    <property type="entry name" value="UCP004555"/>
    <property type="match status" value="1"/>
</dbReference>
<dbReference type="SUPFAM" id="SSF82607">
    <property type="entry name" value="YbaB-like"/>
    <property type="match status" value="1"/>
</dbReference>
<protein>
    <recommendedName>
        <fullName evidence="1">Nucleoid-associated protein Atu0095</fullName>
    </recommendedName>
</protein>
<feature type="chain" id="PRO_0000170360" description="Nucleoid-associated protein Atu0095">
    <location>
        <begin position="1"/>
        <end position="107"/>
    </location>
</feature>
<feature type="region of interest" description="Disordered" evidence="2">
    <location>
        <begin position="81"/>
        <end position="107"/>
    </location>
</feature>
<feature type="compositionally biased region" description="Pro residues" evidence="2">
    <location>
        <begin position="98"/>
        <end position="107"/>
    </location>
</feature>
<reference key="1">
    <citation type="journal article" date="2001" name="Science">
        <title>The genome of the natural genetic engineer Agrobacterium tumefaciens C58.</title>
        <authorList>
            <person name="Wood D.W."/>
            <person name="Setubal J.C."/>
            <person name="Kaul R."/>
            <person name="Monks D.E."/>
            <person name="Kitajima J.P."/>
            <person name="Okura V.K."/>
            <person name="Zhou Y."/>
            <person name="Chen L."/>
            <person name="Wood G.E."/>
            <person name="Almeida N.F. Jr."/>
            <person name="Woo L."/>
            <person name="Chen Y."/>
            <person name="Paulsen I.T."/>
            <person name="Eisen J.A."/>
            <person name="Karp P.D."/>
            <person name="Bovee D. Sr."/>
            <person name="Chapman P."/>
            <person name="Clendenning J."/>
            <person name="Deatherage G."/>
            <person name="Gillet W."/>
            <person name="Grant C."/>
            <person name="Kutyavin T."/>
            <person name="Levy R."/>
            <person name="Li M.-J."/>
            <person name="McClelland E."/>
            <person name="Palmieri A."/>
            <person name="Raymond C."/>
            <person name="Rouse G."/>
            <person name="Saenphimmachak C."/>
            <person name="Wu Z."/>
            <person name="Romero P."/>
            <person name="Gordon D."/>
            <person name="Zhang S."/>
            <person name="Yoo H."/>
            <person name="Tao Y."/>
            <person name="Biddle P."/>
            <person name="Jung M."/>
            <person name="Krespan W."/>
            <person name="Perry M."/>
            <person name="Gordon-Kamm B."/>
            <person name="Liao L."/>
            <person name="Kim S."/>
            <person name="Hendrick C."/>
            <person name="Zhao Z.-Y."/>
            <person name="Dolan M."/>
            <person name="Chumley F."/>
            <person name="Tingey S.V."/>
            <person name="Tomb J.-F."/>
            <person name="Gordon M.P."/>
            <person name="Olson M.V."/>
            <person name="Nester E.W."/>
        </authorList>
    </citation>
    <scope>NUCLEOTIDE SEQUENCE [LARGE SCALE GENOMIC DNA]</scope>
    <source>
        <strain>C58 / ATCC 33970</strain>
    </source>
</reference>
<reference key="2">
    <citation type="journal article" date="2001" name="Science">
        <title>Genome sequence of the plant pathogen and biotechnology agent Agrobacterium tumefaciens C58.</title>
        <authorList>
            <person name="Goodner B."/>
            <person name="Hinkle G."/>
            <person name="Gattung S."/>
            <person name="Miller N."/>
            <person name="Blanchard M."/>
            <person name="Qurollo B."/>
            <person name="Goldman B.S."/>
            <person name="Cao Y."/>
            <person name="Askenazi M."/>
            <person name="Halling C."/>
            <person name="Mullin L."/>
            <person name="Houmiel K."/>
            <person name="Gordon J."/>
            <person name="Vaudin M."/>
            <person name="Iartchouk O."/>
            <person name="Epp A."/>
            <person name="Liu F."/>
            <person name="Wollam C."/>
            <person name="Allinger M."/>
            <person name="Doughty D."/>
            <person name="Scott C."/>
            <person name="Lappas C."/>
            <person name="Markelz B."/>
            <person name="Flanagan C."/>
            <person name="Crowell C."/>
            <person name="Gurson J."/>
            <person name="Lomo C."/>
            <person name="Sear C."/>
            <person name="Strub G."/>
            <person name="Cielo C."/>
            <person name="Slater S."/>
        </authorList>
    </citation>
    <scope>NUCLEOTIDE SEQUENCE [LARGE SCALE GENOMIC DNA]</scope>
    <source>
        <strain>C58 / ATCC 33970</strain>
    </source>
</reference>
<evidence type="ECO:0000255" key="1">
    <source>
        <dbReference type="HAMAP-Rule" id="MF_00274"/>
    </source>
</evidence>
<evidence type="ECO:0000256" key="2">
    <source>
        <dbReference type="SAM" id="MobiDB-lite"/>
    </source>
</evidence>
<organism>
    <name type="scientific">Agrobacterium fabrum (strain C58 / ATCC 33970)</name>
    <name type="common">Agrobacterium tumefaciens (strain C58)</name>
    <dbReference type="NCBI Taxonomy" id="176299"/>
    <lineage>
        <taxon>Bacteria</taxon>
        <taxon>Pseudomonadati</taxon>
        <taxon>Pseudomonadota</taxon>
        <taxon>Alphaproteobacteria</taxon>
        <taxon>Hyphomicrobiales</taxon>
        <taxon>Rhizobiaceae</taxon>
        <taxon>Rhizobium/Agrobacterium group</taxon>
        <taxon>Agrobacterium</taxon>
        <taxon>Agrobacterium tumefaciens complex</taxon>
    </lineage>
</organism>
<gene>
    <name type="ordered locus">Atu0095</name>
    <name type="ORF">AGR_C_145</name>
</gene>
<accession>Q8UJ43</accession>
<proteinExistence type="inferred from homology"/>
<keyword id="KW-0963">Cytoplasm</keyword>
<keyword id="KW-0238">DNA-binding</keyword>
<keyword id="KW-1185">Reference proteome</keyword>
<sequence length="107" mass="11650">MRDIMGMMGKVKEMQSKMEKVQQEIAALEIEGRAGGGLVTVILNGKGEMRGLKIDPSLFKEDEVEILEDLIVAAHKDAKEKGEAQAQEKMADLTAGLPLPPGMKLPF</sequence>
<comment type="function">
    <text evidence="1">Binds to DNA and alters its conformation. May be involved in regulation of gene expression, nucleoid organization and DNA protection.</text>
</comment>
<comment type="subunit">
    <text evidence="1">Homodimer.</text>
</comment>
<comment type="subcellular location">
    <subcellularLocation>
        <location evidence="1">Cytoplasm</location>
        <location evidence="1">Nucleoid</location>
    </subcellularLocation>
</comment>
<comment type="similarity">
    <text evidence="1">Belongs to the YbaB/EbfC family.</text>
</comment>